<dbReference type="EC" id="1.14.11.-" evidence="8"/>
<dbReference type="EMBL" id="LC274619">
    <property type="protein sequence ID" value="BBE36499.1"/>
    <property type="molecule type" value="Genomic_DNA"/>
</dbReference>
<dbReference type="SMR" id="A0A2Z6FZX4"/>
<dbReference type="UniPathway" id="UPA00213"/>
<dbReference type="GO" id="GO:0005737">
    <property type="term" value="C:cytoplasm"/>
    <property type="evidence" value="ECO:0007669"/>
    <property type="project" value="TreeGrafter"/>
</dbReference>
<dbReference type="GO" id="GO:0016706">
    <property type="term" value="F:2-oxoglutarate-dependent dioxygenase activity"/>
    <property type="evidence" value="ECO:0007669"/>
    <property type="project" value="TreeGrafter"/>
</dbReference>
<dbReference type="GO" id="GO:0046872">
    <property type="term" value="F:metal ion binding"/>
    <property type="evidence" value="ECO:0007669"/>
    <property type="project" value="UniProtKB-KW"/>
</dbReference>
<dbReference type="GO" id="GO:0016114">
    <property type="term" value="P:terpenoid biosynthetic process"/>
    <property type="evidence" value="ECO:0007669"/>
    <property type="project" value="UniProtKB-UniPathway"/>
</dbReference>
<dbReference type="Gene3D" id="3.60.130.10">
    <property type="entry name" value="Clavaminate synthase-like"/>
    <property type="match status" value="1"/>
</dbReference>
<dbReference type="InterPro" id="IPR051323">
    <property type="entry name" value="AtsK-like"/>
</dbReference>
<dbReference type="InterPro" id="IPR042098">
    <property type="entry name" value="TauD-like_sf"/>
</dbReference>
<dbReference type="InterPro" id="IPR003819">
    <property type="entry name" value="TauD/TfdA-like"/>
</dbReference>
<dbReference type="PANTHER" id="PTHR30468">
    <property type="entry name" value="ALPHA-KETOGLUTARATE-DEPENDENT SULFONATE DIOXYGENASE"/>
    <property type="match status" value="1"/>
</dbReference>
<dbReference type="PANTHER" id="PTHR30468:SF10">
    <property type="entry name" value="TAUD_TFDA-LIKE DOMAIN-CONTAINING PROTEIN"/>
    <property type="match status" value="1"/>
</dbReference>
<dbReference type="Pfam" id="PF02668">
    <property type="entry name" value="TauD"/>
    <property type="match status" value="1"/>
</dbReference>
<dbReference type="SUPFAM" id="SSF51197">
    <property type="entry name" value="Clavaminate synthase-like"/>
    <property type="match status" value="1"/>
</dbReference>
<gene>
    <name evidence="5" type="primary">btcD</name>
</gene>
<protein>
    <recommendedName>
        <fullName evidence="6">Alpha-ketoglutarate-dependent dioxygenase btcD</fullName>
        <ecNumber evidence="8">1.14.11.-</ecNumber>
    </recommendedName>
    <alternativeName>
        <fullName evidence="6">Betaestacins biosynthesis cluster protein D</fullName>
    </alternativeName>
</protein>
<keyword id="KW-0223">Dioxygenase</keyword>
<keyword id="KW-0408">Iron</keyword>
<keyword id="KW-0479">Metal-binding</keyword>
<keyword id="KW-0560">Oxidoreductase</keyword>
<organism>
    <name type="scientific">Neocamarosporium betae</name>
    <name type="common">Beet black rot fungus</name>
    <name type="synonym">Pleospora betae</name>
    <dbReference type="NCBI Taxonomy" id="1979465"/>
    <lineage>
        <taxon>Eukaryota</taxon>
        <taxon>Fungi</taxon>
        <taxon>Dikarya</taxon>
        <taxon>Ascomycota</taxon>
        <taxon>Pezizomycotina</taxon>
        <taxon>Dothideomycetes</taxon>
        <taxon>Pleosporomycetidae</taxon>
        <taxon>Pleosporales</taxon>
        <taxon>Pleosporineae</taxon>
        <taxon>Pleosporaceae</taxon>
        <taxon>Neocamarosporium</taxon>
    </lineage>
</organism>
<feature type="chain" id="PRO_0000453707" description="Alpha-ketoglutarate-dependent dioxygenase btcD">
    <location>
        <begin position="1"/>
        <end position="339"/>
    </location>
</feature>
<feature type="region of interest" description="Disordered" evidence="2">
    <location>
        <begin position="207"/>
        <end position="230"/>
    </location>
</feature>
<feature type="binding site" evidence="1">
    <location>
        <position position="96"/>
    </location>
    <ligand>
        <name>substrate</name>
    </ligand>
</feature>
<feature type="binding site" evidence="1">
    <location>
        <position position="140"/>
    </location>
    <ligand>
        <name>Fe cation</name>
        <dbReference type="ChEBI" id="CHEBI:24875"/>
        <note>catalytic</note>
    </ligand>
</feature>
<feature type="binding site" evidence="1">
    <location>
        <position position="142"/>
    </location>
    <ligand>
        <name>Fe cation</name>
        <dbReference type="ChEBI" id="CHEBI:24875"/>
        <note>catalytic</note>
    </ligand>
</feature>
<feature type="binding site" evidence="1">
    <location>
        <position position="173"/>
    </location>
    <ligand>
        <name>2-oxoglutarate</name>
        <dbReference type="ChEBI" id="CHEBI:16810"/>
    </ligand>
</feature>
<feature type="binding site" evidence="1">
    <location>
        <position position="302"/>
    </location>
    <ligand>
        <name>Fe cation</name>
        <dbReference type="ChEBI" id="CHEBI:24875"/>
        <note>catalytic</note>
    </ligand>
</feature>
<feature type="binding site" evidence="1">
    <location>
        <position position="314"/>
    </location>
    <ligand>
        <name>2-oxoglutarate</name>
        <dbReference type="ChEBI" id="CHEBI:16810"/>
    </ligand>
</feature>
<feature type="binding site" evidence="1">
    <location>
        <position position="318"/>
    </location>
    <ligand>
        <name>2-oxoglutarate</name>
        <dbReference type="ChEBI" id="CHEBI:16810"/>
    </ligand>
</feature>
<feature type="binding site" evidence="1">
    <location>
        <position position="318"/>
    </location>
    <ligand>
        <name>substrate</name>
    </ligand>
</feature>
<accession>A0A2Z6FZX4</accession>
<comment type="function">
    <text evidence="3 4 8">Alpha-ketoglutarate-dependent dioxygenase; part of the gene cluster that mediates the biosynthesis of betaestacins (PubMed:29185768, Ref.2). The bifunctional terpene synthase btcA converts isopentenyl diphosphate (IPP) and dimethylallyl diphosphate (DMAPP) into the sesterterpene betaestacin I (PubMed:29185768, Ref.2). The C-terminal prenyltransferase (PT) domain of btcA catalyzes formation of GFPP, whereas the N-terminal terpene cyclase (TC) domain catalyzes the cyclization of GFPP into betaestacin I (PubMed:29185768, Ref.2). The cytochrome P450 monooxygenase btcB is then responsible for the six-step oxidation of betaestacin I to yield betaestacin II (Ref.2). The roles of the cytochrome P450 monooxygenase btcC and the alpha-ketoglutarate-dependent dioxygenase btcD have not been identified yet (Probable).</text>
</comment>
<comment type="cofactor">
    <cofactor evidence="1">
        <name>Fe(2+)</name>
        <dbReference type="ChEBI" id="CHEBI:29033"/>
    </cofactor>
    <text evidence="1">Binds 1 Fe(2+) ion per subunit.</text>
</comment>
<comment type="pathway">
    <text evidence="8">Secondary metabolite biosynthesis; terpenoid biosynthesis.</text>
</comment>
<comment type="similarity">
    <text evidence="7">Belongs to the TfdA dioxygenase family.</text>
</comment>
<reference key="1">
    <citation type="journal article" date="2017" name="Org. Lett.">
        <title>Focused genome mining of structurally related sesterterpenes: enzymatic formation of enantiomeric and diastereomeric products.</title>
        <authorList>
            <person name="Narita K."/>
            <person name="Sato H."/>
            <person name="Minami A."/>
            <person name="Kudo K."/>
            <person name="Gao L."/>
            <person name="Liu C."/>
            <person name="Ozaki T."/>
            <person name="Kodama M."/>
            <person name="Lei X."/>
            <person name="Taniguchi T."/>
            <person name="Monde K."/>
            <person name="Yamazaki M."/>
            <person name="Uchiyama M."/>
            <person name="Oikawa H."/>
        </authorList>
    </citation>
    <scope>NUCLEOTIDE SEQUENCE [GENOMIC DNA]</scope>
    <source>
        <strain>PS-13</strain>
    </source>
</reference>
<reference key="2">
    <citation type="journal article" date="2018" name="Tetrahedron Lett.">
        <title>Identification of novel sesterterpenes by genome mining of phytopathogenic fungi Phoma and Colletotrichum sp.</title>
        <authorList>
            <person name="Gao L."/>
            <person name="Narita K."/>
            <person name="Ozaki T."/>
            <person name="Kamukara N."/>
            <person name="Gan P."/>
            <person name="Minami A."/>
            <person name="Liu C."/>
            <person name="Lei X."/>
            <person name="Shirasu K."/>
            <person name="Oikawa H."/>
        </authorList>
    </citation>
    <scope>FUNCTION</scope>
    <scope>PATHWAY</scope>
</reference>
<proteinExistence type="inferred from homology"/>
<evidence type="ECO:0000250" key="1">
    <source>
        <dbReference type="UniProtKB" id="P37610"/>
    </source>
</evidence>
<evidence type="ECO:0000256" key="2">
    <source>
        <dbReference type="SAM" id="MobiDB-lite"/>
    </source>
</evidence>
<evidence type="ECO:0000269" key="3">
    <source>
    </source>
</evidence>
<evidence type="ECO:0000269" key="4">
    <source ref="2"/>
</evidence>
<evidence type="ECO:0000303" key="5">
    <source>
    </source>
</evidence>
<evidence type="ECO:0000303" key="6">
    <source ref="2"/>
</evidence>
<evidence type="ECO:0000305" key="7"/>
<evidence type="ECO:0000305" key="8">
    <source ref="2"/>
</evidence>
<sequence>MALIKEPLKPTGALDEFRSFDVTPIIGTEFPDASLKAWLEDPKADDLLRELAITVSRRGVVFFRRQDGLTEEMQKAIVQKLGVLSGKPATSSLHRHAHQPDPNADPEILWINSEENKKLLAGTPFDPALPARQSCRGLWHNDISYEPNPSDYALLRITQPPALVVADLPAIDTLWASGYEVFDRISRPIQKFLETLTATFGELRERDGSDPKFQVPRGSPANVGTNLRPTHPVIRTNPVTGWKSVYAVGLHVQTINGLASDESDGLKKWFTKLIVENHDLQVRFRWNNANDVAIWDNRCTYHTATYDHEGYGIREGYRACGVGEKPYLDPNSTGRREAR</sequence>
<name>BTCD_NEOBT</name>